<organism>
    <name type="scientific">Vibrio vulnificus (strain YJ016)</name>
    <dbReference type="NCBI Taxonomy" id="196600"/>
    <lineage>
        <taxon>Bacteria</taxon>
        <taxon>Pseudomonadati</taxon>
        <taxon>Pseudomonadota</taxon>
        <taxon>Gammaproteobacteria</taxon>
        <taxon>Vibrionales</taxon>
        <taxon>Vibrionaceae</taxon>
        <taxon>Vibrio</taxon>
    </lineage>
</organism>
<keyword id="KW-0963">Cytoplasm</keyword>
<keyword id="KW-0369">Histidine metabolism</keyword>
<keyword id="KW-0456">Lyase</keyword>
<comment type="catalytic activity">
    <reaction evidence="1">
        <text>L-histidine = trans-urocanate + NH4(+)</text>
        <dbReference type="Rhea" id="RHEA:21232"/>
        <dbReference type="ChEBI" id="CHEBI:17771"/>
        <dbReference type="ChEBI" id="CHEBI:28938"/>
        <dbReference type="ChEBI" id="CHEBI:57595"/>
        <dbReference type="EC" id="4.3.1.3"/>
    </reaction>
</comment>
<comment type="pathway">
    <text evidence="1">Amino-acid degradation; L-histidine degradation into L-glutamate; N-formimidoyl-L-glutamate from L-histidine: step 1/3.</text>
</comment>
<comment type="subcellular location">
    <subcellularLocation>
        <location evidence="1">Cytoplasm</location>
    </subcellularLocation>
</comment>
<comment type="PTM">
    <text evidence="1">Contains an active site 4-methylidene-imidazol-5-one (MIO), which is formed autocatalytically by cyclization and dehydration of residues Ala-Ser-Gly.</text>
</comment>
<comment type="similarity">
    <text evidence="1">Belongs to the PAL/histidase family.</text>
</comment>
<evidence type="ECO:0000255" key="1">
    <source>
        <dbReference type="HAMAP-Rule" id="MF_00229"/>
    </source>
</evidence>
<sequence length="513" mass="55158">MDMLNLTLKPGCLSLNQLRQVSRSPINLSLDASAIPAIEDSTQVVERVIAEDRTVYGINTGFGLLANTRIAPEDLETLQRSIVLSHAAGIGEFMADETVRLMMVLKINSLSRGYSGIRLNVIQMLIDLVNAQVYPCVPQKGSVGASGDLAPLAHMSTVLLGEGQARHNGKIISGLEALKIAGLEPITLAPKEGLALLNGTQASTAFALEGLFIAEDLFASATVCGAMSVEAALGSRRPFDPRIHRVRGHRSQMDSAMAYRHLLDTSSEIGQSHSNCEKVQDPYSLRCQPQVMGACLQQIRNSAEILLVESNSVSDNPLVFAEDDDIISGGNFHAEPVAMAADNLALAIAEIGSLSERRMALLIDSALSKLPPFLVDNGGVNSGFMIAQVTSAALASENKTLAHPASVDSLPTSANQEDHVSMATFAARRLREMGENTRGILAVEYLSAAQGLDFRAPHKSSPRIEQAKQMLREKVSFYDKDRYFAPDIEKANSLLKLAVHNVLMPEALLPSVL</sequence>
<feature type="chain" id="PRO_0000161050" description="Histidine ammonia-lyase">
    <location>
        <begin position="1"/>
        <end position="513"/>
    </location>
</feature>
<feature type="modified residue" description="2,3-didehydroalanine (Ser)" evidence="1">
    <location>
        <position position="146"/>
    </location>
</feature>
<feature type="cross-link" description="5-imidazolinone (Ala-Gly)" evidence="1">
    <location>
        <begin position="145"/>
        <end position="147"/>
    </location>
</feature>
<proteinExistence type="inferred from homology"/>
<dbReference type="EC" id="4.3.1.3" evidence="1"/>
<dbReference type="EMBL" id="BA000037">
    <property type="protein sequence ID" value="BAC94716.1"/>
    <property type="molecule type" value="Genomic_DNA"/>
</dbReference>
<dbReference type="SMR" id="Q7MK58"/>
<dbReference type="STRING" id="672.VV93_v1c17120"/>
<dbReference type="KEGG" id="vvy:VV1952"/>
<dbReference type="eggNOG" id="COG2986">
    <property type="taxonomic scope" value="Bacteria"/>
</dbReference>
<dbReference type="HOGENOM" id="CLU_014801_4_0_6"/>
<dbReference type="UniPathway" id="UPA00379">
    <property type="reaction ID" value="UER00549"/>
</dbReference>
<dbReference type="Proteomes" id="UP000002675">
    <property type="component" value="Chromosome I"/>
</dbReference>
<dbReference type="GO" id="GO:0005737">
    <property type="term" value="C:cytoplasm"/>
    <property type="evidence" value="ECO:0007669"/>
    <property type="project" value="UniProtKB-SubCell"/>
</dbReference>
<dbReference type="GO" id="GO:0004397">
    <property type="term" value="F:histidine ammonia-lyase activity"/>
    <property type="evidence" value="ECO:0007669"/>
    <property type="project" value="UniProtKB-UniRule"/>
</dbReference>
<dbReference type="GO" id="GO:0019556">
    <property type="term" value="P:L-histidine catabolic process to glutamate and formamide"/>
    <property type="evidence" value="ECO:0007669"/>
    <property type="project" value="UniProtKB-UniPathway"/>
</dbReference>
<dbReference type="GO" id="GO:0019557">
    <property type="term" value="P:L-histidine catabolic process to glutamate and formate"/>
    <property type="evidence" value="ECO:0007669"/>
    <property type="project" value="UniProtKB-UniPathway"/>
</dbReference>
<dbReference type="CDD" id="cd00332">
    <property type="entry name" value="PAL-HAL"/>
    <property type="match status" value="1"/>
</dbReference>
<dbReference type="FunFam" id="1.10.275.10:FF:000005">
    <property type="entry name" value="Histidine ammonia-lyase"/>
    <property type="match status" value="1"/>
</dbReference>
<dbReference type="FunFam" id="1.20.200.10:FF:000003">
    <property type="entry name" value="Histidine ammonia-lyase"/>
    <property type="match status" value="1"/>
</dbReference>
<dbReference type="Gene3D" id="1.20.200.10">
    <property type="entry name" value="Fumarase/aspartase (Central domain)"/>
    <property type="match status" value="1"/>
</dbReference>
<dbReference type="Gene3D" id="1.10.275.10">
    <property type="entry name" value="Fumarase/aspartase (N-terminal domain)"/>
    <property type="match status" value="1"/>
</dbReference>
<dbReference type="HAMAP" id="MF_00229">
    <property type="entry name" value="His_ammonia_lyase"/>
    <property type="match status" value="1"/>
</dbReference>
<dbReference type="InterPro" id="IPR001106">
    <property type="entry name" value="Aromatic_Lyase"/>
</dbReference>
<dbReference type="InterPro" id="IPR024083">
    <property type="entry name" value="Fumarase/histidase_N"/>
</dbReference>
<dbReference type="InterPro" id="IPR005921">
    <property type="entry name" value="HutH"/>
</dbReference>
<dbReference type="InterPro" id="IPR008948">
    <property type="entry name" value="L-Aspartase-like"/>
</dbReference>
<dbReference type="InterPro" id="IPR022313">
    <property type="entry name" value="Phe/His_NH3-lyase_AS"/>
</dbReference>
<dbReference type="NCBIfam" id="TIGR01225">
    <property type="entry name" value="hutH"/>
    <property type="match status" value="1"/>
</dbReference>
<dbReference type="NCBIfam" id="NF006871">
    <property type="entry name" value="PRK09367.1"/>
    <property type="match status" value="1"/>
</dbReference>
<dbReference type="PANTHER" id="PTHR10362">
    <property type="entry name" value="HISTIDINE AMMONIA-LYASE"/>
    <property type="match status" value="1"/>
</dbReference>
<dbReference type="Pfam" id="PF00221">
    <property type="entry name" value="Lyase_aromatic"/>
    <property type="match status" value="1"/>
</dbReference>
<dbReference type="SUPFAM" id="SSF48557">
    <property type="entry name" value="L-aspartase-like"/>
    <property type="match status" value="1"/>
</dbReference>
<dbReference type="PROSITE" id="PS00488">
    <property type="entry name" value="PAL_HISTIDASE"/>
    <property type="match status" value="1"/>
</dbReference>
<name>HUTH_VIBVY</name>
<gene>
    <name evidence="1" type="primary">hutH</name>
    <name type="ordered locus">VV1952</name>
</gene>
<accession>Q7MK58</accession>
<protein>
    <recommendedName>
        <fullName evidence="1">Histidine ammonia-lyase</fullName>
        <shortName evidence="1">Histidase</shortName>
        <ecNumber evidence="1">4.3.1.3</ecNumber>
    </recommendedName>
</protein>
<reference key="1">
    <citation type="journal article" date="2003" name="Genome Res.">
        <title>Comparative genome analysis of Vibrio vulnificus, a marine pathogen.</title>
        <authorList>
            <person name="Chen C.-Y."/>
            <person name="Wu K.-M."/>
            <person name="Chang Y.-C."/>
            <person name="Chang C.-H."/>
            <person name="Tsai H.-C."/>
            <person name="Liao T.-L."/>
            <person name="Liu Y.-M."/>
            <person name="Chen H.-J."/>
            <person name="Shen A.B.-T."/>
            <person name="Li J.-C."/>
            <person name="Su T.-L."/>
            <person name="Shao C.-P."/>
            <person name="Lee C.-T."/>
            <person name="Hor L.-I."/>
            <person name="Tsai S.-F."/>
        </authorList>
    </citation>
    <scope>NUCLEOTIDE SEQUENCE [LARGE SCALE GENOMIC DNA]</scope>
    <source>
        <strain>YJ016</strain>
    </source>
</reference>